<protein>
    <recommendedName>
        <fullName evidence="1">2-dehydro-3-deoxyphosphooctonate aldolase</fullName>
        <ecNumber evidence="1">2.5.1.55</ecNumber>
    </recommendedName>
    <alternativeName>
        <fullName evidence="1">3-deoxy-D-manno-octulosonic acid 8-phosphate synthase</fullName>
    </alternativeName>
    <alternativeName>
        <fullName evidence="1">KDO-8-phosphate synthase</fullName>
        <shortName evidence="1">KDO 8-P synthase</shortName>
        <shortName evidence="1">KDOPS</shortName>
    </alternativeName>
    <alternativeName>
        <fullName evidence="1">Phospho-2-dehydro-3-deoxyoctonate aldolase</fullName>
    </alternativeName>
</protein>
<evidence type="ECO:0000255" key="1">
    <source>
        <dbReference type="HAMAP-Rule" id="MF_00056"/>
    </source>
</evidence>
<comment type="catalytic activity">
    <reaction evidence="1">
        <text>D-arabinose 5-phosphate + phosphoenolpyruvate + H2O = 3-deoxy-alpha-D-manno-2-octulosonate-8-phosphate + phosphate</text>
        <dbReference type="Rhea" id="RHEA:14053"/>
        <dbReference type="ChEBI" id="CHEBI:15377"/>
        <dbReference type="ChEBI" id="CHEBI:43474"/>
        <dbReference type="ChEBI" id="CHEBI:57693"/>
        <dbReference type="ChEBI" id="CHEBI:58702"/>
        <dbReference type="ChEBI" id="CHEBI:85985"/>
        <dbReference type="EC" id="2.5.1.55"/>
    </reaction>
</comment>
<comment type="pathway">
    <text evidence="1">Carbohydrate biosynthesis; 3-deoxy-D-manno-octulosonate biosynthesis; 3-deoxy-D-manno-octulosonate from D-ribulose 5-phosphate: step 2/3.</text>
</comment>
<comment type="pathway">
    <text evidence="1">Bacterial outer membrane biogenesis; lipopolysaccharide biosynthesis.</text>
</comment>
<comment type="subcellular location">
    <subcellularLocation>
        <location evidence="1">Cytoplasm</location>
    </subcellularLocation>
</comment>
<comment type="similarity">
    <text evidence="1">Belongs to the KdsA family.</text>
</comment>
<reference key="1">
    <citation type="submission" date="2006-12" db="EMBL/GenBank/DDBJ databases">
        <title>Complete sequence of Shewanella sp. W3-18-1.</title>
        <authorList>
            <consortium name="US DOE Joint Genome Institute"/>
            <person name="Copeland A."/>
            <person name="Lucas S."/>
            <person name="Lapidus A."/>
            <person name="Barry K."/>
            <person name="Detter J.C."/>
            <person name="Glavina del Rio T."/>
            <person name="Hammon N."/>
            <person name="Israni S."/>
            <person name="Dalin E."/>
            <person name="Tice H."/>
            <person name="Pitluck S."/>
            <person name="Chain P."/>
            <person name="Malfatti S."/>
            <person name="Shin M."/>
            <person name="Vergez L."/>
            <person name="Schmutz J."/>
            <person name="Larimer F."/>
            <person name="Land M."/>
            <person name="Hauser L."/>
            <person name="Kyrpides N."/>
            <person name="Lykidis A."/>
            <person name="Tiedje J."/>
            <person name="Richardson P."/>
        </authorList>
    </citation>
    <scope>NUCLEOTIDE SEQUENCE [LARGE SCALE GENOMIC DNA]</scope>
    <source>
        <strain>W3-18-1</strain>
    </source>
</reference>
<gene>
    <name evidence="1" type="primary">kdsA</name>
    <name type="ordered locus">Sputw3181_3365</name>
</gene>
<organism>
    <name type="scientific">Shewanella sp. (strain W3-18-1)</name>
    <dbReference type="NCBI Taxonomy" id="351745"/>
    <lineage>
        <taxon>Bacteria</taxon>
        <taxon>Pseudomonadati</taxon>
        <taxon>Pseudomonadota</taxon>
        <taxon>Gammaproteobacteria</taxon>
        <taxon>Alteromonadales</taxon>
        <taxon>Shewanellaceae</taxon>
        <taxon>Shewanella</taxon>
    </lineage>
</organism>
<dbReference type="EC" id="2.5.1.55" evidence="1"/>
<dbReference type="EMBL" id="CP000503">
    <property type="protein sequence ID" value="ABM26178.1"/>
    <property type="molecule type" value="Genomic_DNA"/>
</dbReference>
<dbReference type="RefSeq" id="WP_011790622.1">
    <property type="nucleotide sequence ID" value="NC_008750.1"/>
</dbReference>
<dbReference type="SMR" id="A1RND3"/>
<dbReference type="KEGG" id="shw:Sputw3181_3365"/>
<dbReference type="HOGENOM" id="CLU_036666_0_0_6"/>
<dbReference type="UniPathway" id="UPA00030"/>
<dbReference type="UniPathway" id="UPA00357">
    <property type="reaction ID" value="UER00474"/>
</dbReference>
<dbReference type="Proteomes" id="UP000002597">
    <property type="component" value="Chromosome"/>
</dbReference>
<dbReference type="GO" id="GO:0005737">
    <property type="term" value="C:cytoplasm"/>
    <property type="evidence" value="ECO:0007669"/>
    <property type="project" value="UniProtKB-SubCell"/>
</dbReference>
<dbReference type="GO" id="GO:0008676">
    <property type="term" value="F:3-deoxy-8-phosphooctulonate synthase activity"/>
    <property type="evidence" value="ECO:0007669"/>
    <property type="project" value="UniProtKB-UniRule"/>
</dbReference>
<dbReference type="GO" id="GO:0019294">
    <property type="term" value="P:keto-3-deoxy-D-manno-octulosonic acid biosynthetic process"/>
    <property type="evidence" value="ECO:0007669"/>
    <property type="project" value="UniProtKB-UniRule"/>
</dbReference>
<dbReference type="Gene3D" id="3.20.20.70">
    <property type="entry name" value="Aldolase class I"/>
    <property type="match status" value="1"/>
</dbReference>
<dbReference type="HAMAP" id="MF_00056">
    <property type="entry name" value="KDO8P_synth"/>
    <property type="match status" value="1"/>
</dbReference>
<dbReference type="InterPro" id="IPR013785">
    <property type="entry name" value="Aldolase_TIM"/>
</dbReference>
<dbReference type="InterPro" id="IPR006218">
    <property type="entry name" value="DAHP1/KDSA"/>
</dbReference>
<dbReference type="InterPro" id="IPR006269">
    <property type="entry name" value="KDO8P_synthase"/>
</dbReference>
<dbReference type="NCBIfam" id="TIGR01362">
    <property type="entry name" value="KDO8P_synth"/>
    <property type="match status" value="1"/>
</dbReference>
<dbReference type="NCBIfam" id="NF003543">
    <property type="entry name" value="PRK05198.1"/>
    <property type="match status" value="1"/>
</dbReference>
<dbReference type="NCBIfam" id="NF009109">
    <property type="entry name" value="PRK12457.1"/>
    <property type="match status" value="1"/>
</dbReference>
<dbReference type="PANTHER" id="PTHR21057">
    <property type="entry name" value="PHOSPHO-2-DEHYDRO-3-DEOXYHEPTONATE ALDOLASE"/>
    <property type="match status" value="1"/>
</dbReference>
<dbReference type="Pfam" id="PF00793">
    <property type="entry name" value="DAHP_synth_1"/>
    <property type="match status" value="1"/>
</dbReference>
<dbReference type="SUPFAM" id="SSF51569">
    <property type="entry name" value="Aldolase"/>
    <property type="match status" value="1"/>
</dbReference>
<proteinExistence type="inferred from homology"/>
<sequence>MSNKIINLGSIEIANDKPFVLFGGMNVLESRDLAMSIAETYAEVTQKLGIPYVFKASFDKANRSSVNSYRGPGMEEGLKIFEEIKKTFNLPLITDVHETYQCAPVAEVVDIIQLPAFLARQTDLVVAMAKTGAIINVKKPQFLAPHEMRHIITKFNEAGNDEIILCERGSCFGYNNLVVDMLGMDEMKQSGYPVIFDATHALQRPGGRSDSAGGRRAQATELARSGMALGLAGLFIEAHPDPDNAKCDGPCALPLHQLENYLKQMKAIDDLVKSFEPIDTSK</sequence>
<keyword id="KW-0963">Cytoplasm</keyword>
<keyword id="KW-0448">Lipopolysaccharide biosynthesis</keyword>
<keyword id="KW-0808">Transferase</keyword>
<feature type="chain" id="PRO_0000304490" description="2-dehydro-3-deoxyphosphooctonate aldolase">
    <location>
        <begin position="1"/>
        <end position="282"/>
    </location>
</feature>
<name>KDSA_SHESW</name>
<accession>A1RND3</accession>